<accession>O88398</accession>
<accession>O70466</accession>
<accession>Q3U1K5</accession>
<reference key="1">
    <citation type="journal article" date="1998" name="J. Cell Sci.">
        <title>Advillin (p92): a new member of the gelsolin/villin family of actin regulatory proteins.</title>
        <authorList>
            <person name="Marks P.W."/>
            <person name="Arai M."/>
            <person name="Bandura J.L."/>
            <person name="Kwiatkowski D.J."/>
        </authorList>
    </citation>
    <scope>NUCLEOTIDE SEQUENCE [MRNA]</scope>
    <scope>TISSUE SPECIFICITY</scope>
    <source>
        <strain>BALB/cJ</strain>
        <tissue>Brain</tissue>
    </source>
</reference>
<reference key="2">
    <citation type="journal article" date="1998" name="EMBO J.">
        <title>Identification of novel stress-induced genes downstream of chop.</title>
        <authorList>
            <person name="Wang X.-Z."/>
            <person name="Kuroda M."/>
            <person name="Sok J."/>
            <person name="Batchvarova N."/>
            <person name="Kimmel R."/>
            <person name="Chung P."/>
            <person name="Zinszner H."/>
            <person name="Ron D."/>
        </authorList>
    </citation>
    <scope>NUCLEOTIDE SEQUENCE [MRNA]</scope>
    <source>
        <strain>NIH Swiss</strain>
    </source>
</reference>
<reference key="3">
    <citation type="journal article" date="2005" name="Science">
        <title>The transcriptional landscape of the mammalian genome.</title>
        <authorList>
            <person name="Carninci P."/>
            <person name="Kasukawa T."/>
            <person name="Katayama S."/>
            <person name="Gough J."/>
            <person name="Frith M.C."/>
            <person name="Maeda N."/>
            <person name="Oyama R."/>
            <person name="Ravasi T."/>
            <person name="Lenhard B."/>
            <person name="Wells C."/>
            <person name="Kodzius R."/>
            <person name="Shimokawa K."/>
            <person name="Bajic V.B."/>
            <person name="Brenner S.E."/>
            <person name="Batalov S."/>
            <person name="Forrest A.R."/>
            <person name="Zavolan M."/>
            <person name="Davis M.J."/>
            <person name="Wilming L.G."/>
            <person name="Aidinis V."/>
            <person name="Allen J.E."/>
            <person name="Ambesi-Impiombato A."/>
            <person name="Apweiler R."/>
            <person name="Aturaliya R.N."/>
            <person name="Bailey T.L."/>
            <person name="Bansal M."/>
            <person name="Baxter L."/>
            <person name="Beisel K.W."/>
            <person name="Bersano T."/>
            <person name="Bono H."/>
            <person name="Chalk A.M."/>
            <person name="Chiu K.P."/>
            <person name="Choudhary V."/>
            <person name="Christoffels A."/>
            <person name="Clutterbuck D.R."/>
            <person name="Crowe M.L."/>
            <person name="Dalla E."/>
            <person name="Dalrymple B.P."/>
            <person name="de Bono B."/>
            <person name="Della Gatta G."/>
            <person name="di Bernardo D."/>
            <person name="Down T."/>
            <person name="Engstrom P."/>
            <person name="Fagiolini M."/>
            <person name="Faulkner G."/>
            <person name="Fletcher C.F."/>
            <person name="Fukushima T."/>
            <person name="Furuno M."/>
            <person name="Futaki S."/>
            <person name="Gariboldi M."/>
            <person name="Georgii-Hemming P."/>
            <person name="Gingeras T.R."/>
            <person name="Gojobori T."/>
            <person name="Green R.E."/>
            <person name="Gustincich S."/>
            <person name="Harbers M."/>
            <person name="Hayashi Y."/>
            <person name="Hensch T.K."/>
            <person name="Hirokawa N."/>
            <person name="Hill D."/>
            <person name="Huminiecki L."/>
            <person name="Iacono M."/>
            <person name="Ikeo K."/>
            <person name="Iwama A."/>
            <person name="Ishikawa T."/>
            <person name="Jakt M."/>
            <person name="Kanapin A."/>
            <person name="Katoh M."/>
            <person name="Kawasawa Y."/>
            <person name="Kelso J."/>
            <person name="Kitamura H."/>
            <person name="Kitano H."/>
            <person name="Kollias G."/>
            <person name="Krishnan S.P."/>
            <person name="Kruger A."/>
            <person name="Kummerfeld S.K."/>
            <person name="Kurochkin I.V."/>
            <person name="Lareau L.F."/>
            <person name="Lazarevic D."/>
            <person name="Lipovich L."/>
            <person name="Liu J."/>
            <person name="Liuni S."/>
            <person name="McWilliam S."/>
            <person name="Madan Babu M."/>
            <person name="Madera M."/>
            <person name="Marchionni L."/>
            <person name="Matsuda H."/>
            <person name="Matsuzawa S."/>
            <person name="Miki H."/>
            <person name="Mignone F."/>
            <person name="Miyake S."/>
            <person name="Morris K."/>
            <person name="Mottagui-Tabar S."/>
            <person name="Mulder N."/>
            <person name="Nakano N."/>
            <person name="Nakauchi H."/>
            <person name="Ng P."/>
            <person name="Nilsson R."/>
            <person name="Nishiguchi S."/>
            <person name="Nishikawa S."/>
            <person name="Nori F."/>
            <person name="Ohara O."/>
            <person name="Okazaki Y."/>
            <person name="Orlando V."/>
            <person name="Pang K.C."/>
            <person name="Pavan W.J."/>
            <person name="Pavesi G."/>
            <person name="Pesole G."/>
            <person name="Petrovsky N."/>
            <person name="Piazza S."/>
            <person name="Reed J."/>
            <person name="Reid J.F."/>
            <person name="Ring B.Z."/>
            <person name="Ringwald M."/>
            <person name="Rost B."/>
            <person name="Ruan Y."/>
            <person name="Salzberg S.L."/>
            <person name="Sandelin A."/>
            <person name="Schneider C."/>
            <person name="Schoenbach C."/>
            <person name="Sekiguchi K."/>
            <person name="Semple C.A."/>
            <person name="Seno S."/>
            <person name="Sessa L."/>
            <person name="Sheng Y."/>
            <person name="Shibata Y."/>
            <person name="Shimada H."/>
            <person name="Shimada K."/>
            <person name="Silva D."/>
            <person name="Sinclair B."/>
            <person name="Sperling S."/>
            <person name="Stupka E."/>
            <person name="Sugiura K."/>
            <person name="Sultana R."/>
            <person name="Takenaka Y."/>
            <person name="Taki K."/>
            <person name="Tammoja K."/>
            <person name="Tan S.L."/>
            <person name="Tang S."/>
            <person name="Taylor M.S."/>
            <person name="Tegner J."/>
            <person name="Teichmann S.A."/>
            <person name="Ueda H.R."/>
            <person name="van Nimwegen E."/>
            <person name="Verardo R."/>
            <person name="Wei C.L."/>
            <person name="Yagi K."/>
            <person name="Yamanishi H."/>
            <person name="Zabarovsky E."/>
            <person name="Zhu S."/>
            <person name="Zimmer A."/>
            <person name="Hide W."/>
            <person name="Bult C."/>
            <person name="Grimmond S.M."/>
            <person name="Teasdale R.D."/>
            <person name="Liu E.T."/>
            <person name="Brusic V."/>
            <person name="Quackenbush J."/>
            <person name="Wahlestedt C."/>
            <person name="Mattick J.S."/>
            <person name="Hume D.A."/>
            <person name="Kai C."/>
            <person name="Sasaki D."/>
            <person name="Tomaru Y."/>
            <person name="Fukuda S."/>
            <person name="Kanamori-Katayama M."/>
            <person name="Suzuki M."/>
            <person name="Aoki J."/>
            <person name="Arakawa T."/>
            <person name="Iida J."/>
            <person name="Imamura K."/>
            <person name="Itoh M."/>
            <person name="Kato T."/>
            <person name="Kawaji H."/>
            <person name="Kawagashira N."/>
            <person name="Kawashima T."/>
            <person name="Kojima M."/>
            <person name="Kondo S."/>
            <person name="Konno H."/>
            <person name="Nakano K."/>
            <person name="Ninomiya N."/>
            <person name="Nishio T."/>
            <person name="Okada M."/>
            <person name="Plessy C."/>
            <person name="Shibata K."/>
            <person name="Shiraki T."/>
            <person name="Suzuki S."/>
            <person name="Tagami M."/>
            <person name="Waki K."/>
            <person name="Watahiki A."/>
            <person name="Okamura-Oho Y."/>
            <person name="Suzuki H."/>
            <person name="Kawai J."/>
            <person name="Hayashizaki Y."/>
        </authorList>
    </citation>
    <scope>NUCLEOTIDE SEQUENCE [LARGE SCALE MRNA]</scope>
    <source>
        <strain>C57BL/6J</strain>
        <strain>NOD</strain>
    </source>
</reference>
<reference key="4">
    <citation type="submission" date="2005-07" db="EMBL/GenBank/DDBJ databases">
        <authorList>
            <person name="Mural R.J."/>
            <person name="Adams M.D."/>
            <person name="Myers E.W."/>
            <person name="Smith H.O."/>
            <person name="Venter J.C."/>
        </authorList>
    </citation>
    <scope>NUCLEOTIDE SEQUENCE [LARGE SCALE GENOMIC DNA]</scope>
</reference>
<reference key="5">
    <citation type="journal article" date="2004" name="Genome Res.">
        <title>The status, quality, and expansion of the NIH full-length cDNA project: the Mammalian Gene Collection (MGC).</title>
        <authorList>
            <consortium name="The MGC Project Team"/>
        </authorList>
    </citation>
    <scope>NUCLEOTIDE SEQUENCE [LARGE SCALE MRNA]</scope>
    <source>
        <tissue>Brain</tissue>
    </source>
</reference>
<reference key="6">
    <citation type="journal article" date="2004" name="J. Biol. Chem.">
        <title>Type F scavenger receptor SREC-I interacts with advillin, a member of the gelsolin/villin family, and induces neurite-like outgrowth.</title>
        <authorList>
            <person name="Shibata M."/>
            <person name="Ishii J."/>
            <person name="Koizumi H."/>
            <person name="Shibata N."/>
            <person name="Dohmae N."/>
            <person name="Takio K."/>
            <person name="Adachi H."/>
            <person name="Tsujimoto M."/>
            <person name="Arai H."/>
        </authorList>
    </citation>
    <scope>FUNCTION</scope>
    <scope>INTERACTION WITH SCARF1</scope>
    <scope>DEVELOPMENTAL STAGE</scope>
    <scope>TISSUE SPECIFICITY</scope>
    <scope>IDENTIFICATION BY MASS SPECTROMETRY</scope>
</reference>
<reference key="7">
    <citation type="journal article" date="2007" name="J. Immunol.">
        <title>Quantitative time-resolved phosphoproteomic analysis of mast cell signaling.</title>
        <authorList>
            <person name="Cao L."/>
            <person name="Yu K."/>
            <person name="Banh C."/>
            <person name="Nguyen V."/>
            <person name="Ritz A."/>
            <person name="Raphael B.J."/>
            <person name="Kawakami Y."/>
            <person name="Kawakami T."/>
            <person name="Salomon A.R."/>
        </authorList>
    </citation>
    <scope>PHOSPHORYLATION [LARGE SCALE ANALYSIS] AT TYR-85; TYR-748 AND TYR-758</scope>
    <scope>IDENTIFICATION BY MASS SPECTROMETRY [LARGE SCALE ANALYSIS]</scope>
    <source>
        <tissue>Mast cell</tissue>
    </source>
</reference>
<reference key="8">
    <citation type="journal article" date="2007" name="J. Neurosci.">
        <title>Analyzing somatosensory axon projections with the sensory neuron-specific Advillin gene.</title>
        <authorList>
            <person name="Hasegawa H."/>
            <person name="Abbott S."/>
            <person name="Han B.X."/>
            <person name="Qi Y."/>
            <person name="Wang F."/>
        </authorList>
    </citation>
    <scope>FUNCTION</scope>
    <scope>DEVELOPMENTAL STAGE</scope>
    <scope>TISSUE SPECIFICITY</scope>
    <scope>DISRUPTION PHENOTYPE</scope>
</reference>
<dbReference type="EMBL" id="AF041448">
    <property type="protein sequence ID" value="AAC25050.1"/>
    <property type="molecule type" value="mRNA"/>
</dbReference>
<dbReference type="EMBL" id="AF059486">
    <property type="protein sequence ID" value="AAC31808.1"/>
    <property type="molecule type" value="mRNA"/>
</dbReference>
<dbReference type="EMBL" id="AK154851">
    <property type="protein sequence ID" value="BAE32877.1"/>
    <property type="molecule type" value="mRNA"/>
</dbReference>
<dbReference type="EMBL" id="AK155900">
    <property type="protein sequence ID" value="BAE33492.1"/>
    <property type="molecule type" value="mRNA"/>
</dbReference>
<dbReference type="EMBL" id="CH466578">
    <property type="protein sequence ID" value="EDL24458.1"/>
    <property type="molecule type" value="Genomic_DNA"/>
</dbReference>
<dbReference type="EMBL" id="BC120545">
    <property type="protein sequence ID" value="AAI20546.1"/>
    <property type="molecule type" value="mRNA"/>
</dbReference>
<dbReference type="CCDS" id="CCDS24221.1"/>
<dbReference type="RefSeq" id="NP_001389419.1">
    <property type="nucleotide sequence ID" value="NM_001402490.1"/>
</dbReference>
<dbReference type="RefSeq" id="NP_033765.2">
    <property type="nucleotide sequence ID" value="NM_009635.4"/>
</dbReference>
<dbReference type="SMR" id="O88398"/>
<dbReference type="BioGRID" id="198012">
    <property type="interactions" value="5"/>
</dbReference>
<dbReference type="FunCoup" id="O88398">
    <property type="interactions" value="27"/>
</dbReference>
<dbReference type="IntAct" id="O88398">
    <property type="interactions" value="1"/>
</dbReference>
<dbReference type="STRING" id="10090.ENSMUSP00000026500"/>
<dbReference type="iPTMnet" id="O88398"/>
<dbReference type="PhosphoSitePlus" id="O88398"/>
<dbReference type="PaxDb" id="10090-ENSMUSP00000026500"/>
<dbReference type="PeptideAtlas" id="O88398"/>
<dbReference type="ProteomicsDB" id="277233"/>
<dbReference type="Antibodypedia" id="28969">
    <property type="antibodies" value="138 antibodies from 22 providers"/>
</dbReference>
<dbReference type="DNASU" id="11567"/>
<dbReference type="Ensembl" id="ENSMUST00000026500.12">
    <property type="protein sequence ID" value="ENSMUSP00000026500.6"/>
    <property type="gene ID" value="ENSMUSG00000025432.12"/>
</dbReference>
<dbReference type="Ensembl" id="ENSMUST00000129173.2">
    <property type="protein sequence ID" value="ENSMUSP00000123405.2"/>
    <property type="gene ID" value="ENSMUSG00000025432.12"/>
</dbReference>
<dbReference type="GeneID" id="11567"/>
<dbReference type="KEGG" id="mmu:11567"/>
<dbReference type="UCSC" id="uc007hhl.2">
    <property type="organism name" value="mouse"/>
</dbReference>
<dbReference type="AGR" id="MGI:1333798"/>
<dbReference type="CTD" id="10677"/>
<dbReference type="MGI" id="MGI:1333798">
    <property type="gene designation" value="Avil"/>
</dbReference>
<dbReference type="VEuPathDB" id="HostDB:ENSMUSG00000025432"/>
<dbReference type="eggNOG" id="KOG0443">
    <property type="taxonomic scope" value="Eukaryota"/>
</dbReference>
<dbReference type="GeneTree" id="ENSGT00940000159587"/>
<dbReference type="HOGENOM" id="CLU_002568_3_1_1"/>
<dbReference type="InParanoid" id="O88398"/>
<dbReference type="OMA" id="DPNIWSA"/>
<dbReference type="OrthoDB" id="6375767at2759"/>
<dbReference type="PhylomeDB" id="O88398"/>
<dbReference type="TreeFam" id="TF313468"/>
<dbReference type="BioGRID-ORCS" id="11567">
    <property type="hits" value="1 hit in 76 CRISPR screens"/>
</dbReference>
<dbReference type="PRO" id="PR:O88398"/>
<dbReference type="Proteomes" id="UP000000589">
    <property type="component" value="Chromosome 10"/>
</dbReference>
<dbReference type="RNAct" id="O88398">
    <property type="molecule type" value="protein"/>
</dbReference>
<dbReference type="Bgee" id="ENSMUSG00000025432">
    <property type="expression patterns" value="Expressed in pyloric antrum and 106 other cell types or tissues"/>
</dbReference>
<dbReference type="ExpressionAtlas" id="O88398">
    <property type="expression patterns" value="baseline and differential"/>
</dbReference>
<dbReference type="GO" id="GO:0005884">
    <property type="term" value="C:actin filament"/>
    <property type="evidence" value="ECO:0000250"/>
    <property type="project" value="UniProtKB"/>
</dbReference>
<dbReference type="GO" id="GO:0030424">
    <property type="term" value="C:axon"/>
    <property type="evidence" value="ECO:0007669"/>
    <property type="project" value="UniProtKB-SubCell"/>
</dbReference>
<dbReference type="GO" id="GO:0042995">
    <property type="term" value="C:cell projection"/>
    <property type="evidence" value="ECO:0000250"/>
    <property type="project" value="UniProtKB"/>
</dbReference>
<dbReference type="GO" id="GO:0005737">
    <property type="term" value="C:cytoplasm"/>
    <property type="evidence" value="ECO:0007669"/>
    <property type="project" value="UniProtKB-KW"/>
</dbReference>
<dbReference type="GO" id="GO:0005925">
    <property type="term" value="C:focal adhesion"/>
    <property type="evidence" value="ECO:0000250"/>
    <property type="project" value="UniProtKB"/>
</dbReference>
<dbReference type="GO" id="GO:0030027">
    <property type="term" value="C:lamellipodium"/>
    <property type="evidence" value="ECO:0000250"/>
    <property type="project" value="UniProtKB"/>
</dbReference>
<dbReference type="GO" id="GO:0043005">
    <property type="term" value="C:neuron projection"/>
    <property type="evidence" value="ECO:0000250"/>
    <property type="project" value="UniProtKB"/>
</dbReference>
<dbReference type="GO" id="GO:0003779">
    <property type="term" value="F:actin binding"/>
    <property type="evidence" value="ECO:0000250"/>
    <property type="project" value="UniProtKB"/>
</dbReference>
<dbReference type="GO" id="GO:0051015">
    <property type="term" value="F:actin filament binding"/>
    <property type="evidence" value="ECO:0000250"/>
    <property type="project" value="UniProtKB"/>
</dbReference>
<dbReference type="GO" id="GO:0071933">
    <property type="term" value="F:Arp2/3 complex binding"/>
    <property type="evidence" value="ECO:0000250"/>
    <property type="project" value="UniProtKB"/>
</dbReference>
<dbReference type="GO" id="GO:0051693">
    <property type="term" value="P:actin filament capping"/>
    <property type="evidence" value="ECO:0007669"/>
    <property type="project" value="UniProtKB-KW"/>
</dbReference>
<dbReference type="GO" id="GO:0007015">
    <property type="term" value="P:actin filament organization"/>
    <property type="evidence" value="ECO:0000250"/>
    <property type="project" value="UniProtKB"/>
</dbReference>
<dbReference type="GO" id="GO:0060271">
    <property type="term" value="P:cilium assembly"/>
    <property type="evidence" value="ECO:0000250"/>
    <property type="project" value="UniProtKB"/>
</dbReference>
<dbReference type="GO" id="GO:0007399">
    <property type="term" value="P:nervous system development"/>
    <property type="evidence" value="ECO:0007669"/>
    <property type="project" value="Ensembl"/>
</dbReference>
<dbReference type="GO" id="GO:0010592">
    <property type="term" value="P:positive regulation of lamellipodium assembly"/>
    <property type="evidence" value="ECO:0000250"/>
    <property type="project" value="UniProtKB"/>
</dbReference>
<dbReference type="GO" id="GO:0010976">
    <property type="term" value="P:positive regulation of neuron projection development"/>
    <property type="evidence" value="ECO:0000314"/>
    <property type="project" value="UniProtKB"/>
</dbReference>
<dbReference type="GO" id="GO:1900480">
    <property type="term" value="P:regulation of diacylglycerol biosynthetic process"/>
    <property type="evidence" value="ECO:0000250"/>
    <property type="project" value="UniProtKB"/>
</dbReference>
<dbReference type="CDD" id="cd11290">
    <property type="entry name" value="gelsolin_S1_like"/>
    <property type="match status" value="1"/>
</dbReference>
<dbReference type="CDD" id="cd11289">
    <property type="entry name" value="gelsolin_S2_like"/>
    <property type="match status" value="1"/>
</dbReference>
<dbReference type="CDD" id="cd11292">
    <property type="entry name" value="gelsolin_S3_like"/>
    <property type="match status" value="1"/>
</dbReference>
<dbReference type="CDD" id="cd11293">
    <property type="entry name" value="gelsolin_S4_like"/>
    <property type="match status" value="1"/>
</dbReference>
<dbReference type="CDD" id="cd11288">
    <property type="entry name" value="gelsolin_S5_like"/>
    <property type="match status" value="1"/>
</dbReference>
<dbReference type="CDD" id="cd11291">
    <property type="entry name" value="gelsolin_S6_like"/>
    <property type="match status" value="1"/>
</dbReference>
<dbReference type="FunFam" id="3.40.20.10:FF:000001">
    <property type="entry name" value="Gelsolin"/>
    <property type="match status" value="1"/>
</dbReference>
<dbReference type="FunFam" id="3.40.20.10:FF:000002">
    <property type="entry name" value="Gelsolin"/>
    <property type="match status" value="1"/>
</dbReference>
<dbReference type="FunFam" id="3.40.20.10:FF:000004">
    <property type="entry name" value="Gelsolin"/>
    <property type="match status" value="1"/>
</dbReference>
<dbReference type="FunFam" id="3.40.20.10:FF:000005">
    <property type="entry name" value="Gelsolin"/>
    <property type="match status" value="1"/>
</dbReference>
<dbReference type="FunFam" id="3.40.20.10:FF:000027">
    <property type="entry name" value="Villin 1"/>
    <property type="match status" value="1"/>
</dbReference>
<dbReference type="FunFam" id="1.10.950.10:FF:000005">
    <property type="entry name" value="Villin-1"/>
    <property type="match status" value="1"/>
</dbReference>
<dbReference type="FunFam" id="3.40.20.10:FF:000035">
    <property type="entry name" value="Villin-1"/>
    <property type="match status" value="1"/>
</dbReference>
<dbReference type="Gene3D" id="3.40.20.10">
    <property type="entry name" value="Severin"/>
    <property type="match status" value="6"/>
</dbReference>
<dbReference type="Gene3D" id="1.10.950.10">
    <property type="entry name" value="Villin headpiece domain"/>
    <property type="match status" value="1"/>
</dbReference>
<dbReference type="InterPro" id="IPR029006">
    <property type="entry name" value="ADF-H/Gelsolin-like_dom_sf"/>
</dbReference>
<dbReference type="InterPro" id="IPR007123">
    <property type="entry name" value="Gelsolin-like_dom"/>
</dbReference>
<dbReference type="InterPro" id="IPR036180">
    <property type="entry name" value="Gelsolin-like_dom_sf"/>
</dbReference>
<dbReference type="InterPro" id="IPR007122">
    <property type="entry name" value="Villin/Gelsolin"/>
</dbReference>
<dbReference type="InterPro" id="IPR003128">
    <property type="entry name" value="Villin_headpiece"/>
</dbReference>
<dbReference type="InterPro" id="IPR036886">
    <property type="entry name" value="Villin_headpiece_dom_sf"/>
</dbReference>
<dbReference type="PANTHER" id="PTHR11977:SF33">
    <property type="entry name" value="ADVILLIN"/>
    <property type="match status" value="1"/>
</dbReference>
<dbReference type="PANTHER" id="PTHR11977">
    <property type="entry name" value="VILLIN"/>
    <property type="match status" value="1"/>
</dbReference>
<dbReference type="Pfam" id="PF00626">
    <property type="entry name" value="Gelsolin"/>
    <property type="match status" value="6"/>
</dbReference>
<dbReference type="Pfam" id="PF02209">
    <property type="entry name" value="VHP"/>
    <property type="match status" value="1"/>
</dbReference>
<dbReference type="PRINTS" id="PR00597">
    <property type="entry name" value="GELSOLIN"/>
</dbReference>
<dbReference type="SMART" id="SM00262">
    <property type="entry name" value="GEL"/>
    <property type="match status" value="6"/>
</dbReference>
<dbReference type="SMART" id="SM00153">
    <property type="entry name" value="VHP"/>
    <property type="match status" value="1"/>
</dbReference>
<dbReference type="SUPFAM" id="SSF55753">
    <property type="entry name" value="Actin depolymerizing proteins"/>
    <property type="match status" value="5"/>
</dbReference>
<dbReference type="SUPFAM" id="SSF82754">
    <property type="entry name" value="C-terminal, gelsolin-like domain of Sec23/24"/>
    <property type="match status" value="1"/>
</dbReference>
<dbReference type="SUPFAM" id="SSF47050">
    <property type="entry name" value="VHP, Villin headpiece domain"/>
    <property type="match status" value="1"/>
</dbReference>
<dbReference type="PROSITE" id="PS51089">
    <property type="entry name" value="HP"/>
    <property type="match status" value="1"/>
</dbReference>
<gene>
    <name evidence="9" type="primary">Avil</name>
    <name type="synonym">Advil</name>
</gene>
<protein>
    <recommendedName>
        <fullName evidence="8">Advillin</fullName>
    </recommendedName>
    <alternativeName>
        <fullName>Actin-binding protein DOC6</fullName>
    </alternativeName>
    <alternativeName>
        <fullName>p92</fullName>
    </alternativeName>
</protein>
<comment type="function">
    <text evidence="2 5 6">Ca(2+)-regulated actin-binding protein which plays an important role in actin bundling. May have a unique function in the morphogenesis of neuronal cells which form ganglia. Required for SREC1-mediated regulation of neurite-like outgrowth. Plays a role in regenerative sensory axon outgrowth and remodeling processes after peripheral injury in neonates. Involved in the formation of long fine actin-containing filopodia-like structures in fibroblast. Plays a role in ciliogenesis (PubMed:15247299, PubMed:18160648). In podocytes, controls lamellipodia formation through the regulation of EGF-induced diacylglycerol generation by PLCE1 and ARP2/3 complex assembly (By similarity).</text>
</comment>
<comment type="subunit">
    <text evidence="2 3 5">Associates (via C-terminus) with actin (By similarity). Interacts with F-actin (By similarity). Interacts with SCARF1; the interaction occurs in embryonic dorsal root ganglions at 18 dpc and induces neurite-like outgrowth (PubMed:15247299). Interacts with PLCE1. Interacts with ACTR2 and ACTR3; associates with the ARP2/3 complex (By similarity).</text>
</comment>
<comment type="subcellular location">
    <subcellularLocation>
        <location evidence="2">Cytoplasm</location>
        <location evidence="2">Cytoskeleton</location>
    </subcellularLocation>
    <subcellularLocation>
        <location evidence="2">Cell projection</location>
        <location evidence="2">Lamellipodium</location>
    </subcellularLocation>
    <subcellularLocation>
        <location evidence="2">Cell junction</location>
        <location evidence="2">Focal adhesion</location>
    </subcellularLocation>
    <subcellularLocation>
        <location evidence="3">Cell projection</location>
        <location evidence="3">Neuron projection</location>
    </subcellularLocation>
    <subcellularLocation>
        <location evidence="3">Cell projection</location>
        <location evidence="3">Axon</location>
    </subcellularLocation>
    <text evidence="2">In podocytes, present in the F-actin-enriched cell periphery that generates lamellipodia and focal adhesions.</text>
</comment>
<comment type="tissue specificity">
    <text evidence="5 6 7">Most highly expressed in the endometrium of the uterus, the intestinal villi and the testes. Weaker expression also detected in the brain, dorsal root ganglions and on the surface of the tongue.</text>
</comment>
<comment type="developmental stage">
    <text evidence="5 6">Expressed almost exclusively in peripheral sensory neurons (craniofacial and dorsal root ganglia (DRG) sensory neurons), but also in trigeminal ganglia (TG) Me5 proprioceptive neurons and Mo5 motoneurons.</text>
</comment>
<comment type="disruption phenotype">
    <text evidence="6">Half of the homozygous mice die during embryogenesis, the other 50% do not show any noticeable abnormality in development, growth or behavior and are fertile.</text>
</comment>
<comment type="similarity">
    <text evidence="8">Belongs to the villin/gelsolin family.</text>
</comment>
<evidence type="ECO:0000250" key="1"/>
<evidence type="ECO:0000250" key="2">
    <source>
        <dbReference type="UniProtKB" id="O75366"/>
    </source>
</evidence>
<evidence type="ECO:0000250" key="3">
    <source>
        <dbReference type="UniProtKB" id="Q9WU06"/>
    </source>
</evidence>
<evidence type="ECO:0000255" key="4">
    <source>
        <dbReference type="PROSITE-ProRule" id="PRU00595"/>
    </source>
</evidence>
<evidence type="ECO:0000269" key="5">
    <source>
    </source>
</evidence>
<evidence type="ECO:0000269" key="6">
    <source>
    </source>
</evidence>
<evidence type="ECO:0000269" key="7">
    <source>
    </source>
</evidence>
<evidence type="ECO:0000305" key="8"/>
<evidence type="ECO:0000312" key="9">
    <source>
        <dbReference type="MGI" id="MGI:1333798"/>
    </source>
</evidence>
<evidence type="ECO:0007744" key="10">
    <source>
    </source>
</evidence>
<feature type="chain" id="PRO_0000218737" description="Advillin">
    <location>
        <begin position="1"/>
        <end position="819"/>
    </location>
</feature>
<feature type="repeat" description="Gelsolin-like 1">
    <location>
        <begin position="24"/>
        <end position="73"/>
    </location>
</feature>
<feature type="repeat" description="Gelsolin-like 2">
    <location>
        <begin position="145"/>
        <end position="185"/>
    </location>
</feature>
<feature type="repeat" description="Gelsolin-like 3">
    <location>
        <begin position="262"/>
        <end position="306"/>
    </location>
</feature>
<feature type="repeat" description="Gelsolin-like 4">
    <location>
        <begin position="403"/>
        <end position="454"/>
    </location>
</feature>
<feature type="repeat" description="Gelsolin-like 5">
    <location>
        <begin position="525"/>
        <end position="565"/>
    </location>
</feature>
<feature type="repeat" description="Gelsolin-like 6">
    <location>
        <begin position="628"/>
        <end position="669"/>
    </location>
</feature>
<feature type="domain" description="HP" evidence="4">
    <location>
        <begin position="753"/>
        <end position="819"/>
    </location>
</feature>
<feature type="region of interest" description="Core" evidence="1">
    <location>
        <begin position="1"/>
        <end position="731"/>
    </location>
</feature>
<feature type="region of interest" description="Required for interaction with F-actin" evidence="2">
    <location>
        <begin position="628"/>
        <end position="819"/>
    </location>
</feature>
<feature type="region of interest" description="Headpiece" evidence="1">
    <location>
        <begin position="732"/>
        <end position="819"/>
    </location>
</feature>
<feature type="binding site" evidence="1">
    <location>
        <begin position="109"/>
        <end position="116"/>
    </location>
    <ligand>
        <name>a 1,2-diacyl-sn-glycero-3-phospho-(1D-myo-inositol-4,5-bisphosphate)</name>
        <dbReference type="ChEBI" id="CHEBI:58456"/>
    </ligand>
</feature>
<feature type="binding site" evidence="1">
    <location>
        <begin position="135"/>
        <end position="143"/>
    </location>
    <ligand>
        <name>a 1,2-diacyl-sn-glycero-3-phospho-(1D-myo-inositol-4,5-bisphosphate)</name>
        <dbReference type="ChEBI" id="CHEBI:58456"/>
    </ligand>
</feature>
<feature type="modified residue" description="Phosphotyrosine" evidence="10">
    <location>
        <position position="85"/>
    </location>
</feature>
<feature type="modified residue" description="Phosphotyrosine" evidence="10">
    <location>
        <position position="748"/>
    </location>
</feature>
<feature type="modified residue" description="Phosphotyrosine" evidence="10">
    <location>
        <position position="758"/>
    </location>
</feature>
<feature type="sequence conflict" description="In Ref. 2; AAC31808." evidence="8" ref="2">
    <original>R</original>
    <variation>G</variation>
    <location>
        <position position="15"/>
    </location>
</feature>
<feature type="sequence conflict" description="In Ref. 1; AAC25050." evidence="8" ref="1">
    <original>G</original>
    <variation>R</variation>
    <location>
        <position position="469"/>
    </location>
</feature>
<feature type="sequence conflict" description="In Ref. 1; AAC25050." evidence="8" ref="1">
    <original>N</original>
    <variation>I</variation>
    <location>
        <position position="538"/>
    </location>
</feature>
<feature type="sequence conflict" description="In Ref. 1; AAC25050." evidence="8" ref="1">
    <original>Q</original>
    <variation>R</variation>
    <location>
        <position position="809"/>
    </location>
</feature>
<feature type="sequence conflict" description="In Ref. 1; AAC25050." evidence="8" ref="1">
    <original>K</original>
    <variation>R</variation>
    <location>
        <position position="814"/>
    </location>
</feature>
<keyword id="KW-0117">Actin capping</keyword>
<keyword id="KW-0009">Actin-binding</keyword>
<keyword id="KW-0106">Calcium</keyword>
<keyword id="KW-0965">Cell junction</keyword>
<keyword id="KW-0966">Cell projection</keyword>
<keyword id="KW-0963">Cytoplasm</keyword>
<keyword id="KW-0206">Cytoskeleton</keyword>
<keyword id="KW-0597">Phosphoprotein</keyword>
<keyword id="KW-1185">Reference proteome</keyword>
<keyword id="KW-0677">Repeat</keyword>
<sequence>MSLSSAFRAVSNDPRIITWRIEKMELALVPLSAHGNFYEGDCYIVLSTRRVGSLLSQNIHFWIGKDSSQDEQSCAAIYTTQLDDYLGGSPVQHREVQYHESDTFRGYFKQGIIYKKGGVASGMKHVETNTYDVKRLLHVKGKRNIQATEVEMSWDSFNRGDVFLLDLGMVIIQWNGPESNSGERLKAMLLAKDIRDRERGGRAEIGVIEGDKEAASPGLMTVLQDTLGRRSMIKPAVSDEIMDQQQKSSIMLYHVSDTAGQLSVTEVATRPLVQDLLNHDDCYILDQSGTKIYVWKGKGATKVEKQAAMSKALDFIKMKGYPSSTNVETVNDGAESAMFKQLFQKWSVKDQTTGLGKIFSTGKIAKIFQDKFDVSLLHTKPEVAAQERMVDDGKGQVEVWRIENLELVPVEYQWHGFFYGGDCYLVLYTYDVNGKPHYILYIWQGRHASRDELAASAYRAVEVDQQFDGAPVQVRVSMGKEPRHFMAIFKGKLVIYEGGTSRKGNEEPDPPVRLFQIHGNDKSNTKAVEVSASASSLNSNDVFLLRTQAEHYLWYGKGSSGDERAMAKELVDLLCDGNADTVAEGQEPPEFWDLLGGKTAYANDKRLQQETLDVQVRLFECSNKTGRFLVTEVTDFTQEDLSPGDVMLLDTWDQVFLWIGAEANATEKKGALSTAQEYLVTHPSGRDPDTPILIIKQGFEPPTFTGWFLAWDPHIWSEGKSYEQLKNELGDATAIVRITADMKNATLYLNPSDGEPKYYPVEVLLKGQNQELPEDVDPAKKENYLSEQDFVSVFGITRGQFTALPGWKQLQLKKERGLF</sequence>
<organism>
    <name type="scientific">Mus musculus</name>
    <name type="common">Mouse</name>
    <dbReference type="NCBI Taxonomy" id="10090"/>
    <lineage>
        <taxon>Eukaryota</taxon>
        <taxon>Metazoa</taxon>
        <taxon>Chordata</taxon>
        <taxon>Craniata</taxon>
        <taxon>Vertebrata</taxon>
        <taxon>Euteleostomi</taxon>
        <taxon>Mammalia</taxon>
        <taxon>Eutheria</taxon>
        <taxon>Euarchontoglires</taxon>
        <taxon>Glires</taxon>
        <taxon>Rodentia</taxon>
        <taxon>Myomorpha</taxon>
        <taxon>Muroidea</taxon>
        <taxon>Muridae</taxon>
        <taxon>Murinae</taxon>
        <taxon>Mus</taxon>
        <taxon>Mus</taxon>
    </lineage>
</organism>
<name>AVIL_MOUSE</name>
<proteinExistence type="evidence at protein level"/>